<proteinExistence type="inferred from homology"/>
<protein>
    <recommendedName>
        <fullName evidence="1">RNA chaperone ProQ</fullName>
    </recommendedName>
</protein>
<dbReference type="EMBL" id="CP001396">
    <property type="protein sequence ID" value="ACR65110.1"/>
    <property type="molecule type" value="Genomic_DNA"/>
</dbReference>
<dbReference type="RefSeq" id="WP_000431381.1">
    <property type="nucleotide sequence ID" value="NC_012759.1"/>
</dbReference>
<dbReference type="SMR" id="C4ZZI8"/>
<dbReference type="KEGG" id="ebw:BWG_1645"/>
<dbReference type="HOGENOM" id="CLU_113254_0_0_6"/>
<dbReference type="GO" id="GO:0005829">
    <property type="term" value="C:cytosol"/>
    <property type="evidence" value="ECO:0007669"/>
    <property type="project" value="TreeGrafter"/>
</dbReference>
<dbReference type="GO" id="GO:0033592">
    <property type="term" value="F:RNA strand annealing activity"/>
    <property type="evidence" value="ECO:0007669"/>
    <property type="project" value="UniProtKB-UniRule"/>
</dbReference>
<dbReference type="GO" id="GO:0034057">
    <property type="term" value="F:RNA strand-exchange activity"/>
    <property type="evidence" value="ECO:0007669"/>
    <property type="project" value="UniProtKB-UniRule"/>
</dbReference>
<dbReference type="GO" id="GO:0010608">
    <property type="term" value="P:post-transcriptional regulation of gene expression"/>
    <property type="evidence" value="ECO:0007669"/>
    <property type="project" value="InterPro"/>
</dbReference>
<dbReference type="FunFam" id="1.10.1710.10:FF:000001">
    <property type="entry name" value="RNA chaperone ProQ"/>
    <property type="match status" value="1"/>
</dbReference>
<dbReference type="Gene3D" id="1.10.1710.10">
    <property type="entry name" value="ProQ/FinO domain"/>
    <property type="match status" value="1"/>
</dbReference>
<dbReference type="HAMAP" id="MF_00749">
    <property type="entry name" value="ProQ"/>
    <property type="match status" value="1"/>
</dbReference>
<dbReference type="InterPro" id="IPR023529">
    <property type="entry name" value="ProQ"/>
</dbReference>
<dbReference type="InterPro" id="IPR016103">
    <property type="entry name" value="ProQ/FinO"/>
</dbReference>
<dbReference type="InterPro" id="IPR036442">
    <property type="entry name" value="ProQ/FinO_sf"/>
</dbReference>
<dbReference type="InterPro" id="IPR035236">
    <property type="entry name" value="ProQ_C"/>
</dbReference>
<dbReference type="NCBIfam" id="NF003434">
    <property type="entry name" value="PRK04950.1"/>
    <property type="match status" value="1"/>
</dbReference>
<dbReference type="PANTHER" id="PTHR38106">
    <property type="entry name" value="RNA CHAPERONE PROQ"/>
    <property type="match status" value="1"/>
</dbReference>
<dbReference type="PANTHER" id="PTHR38106:SF1">
    <property type="entry name" value="RNA CHAPERONE PROQ"/>
    <property type="match status" value="1"/>
</dbReference>
<dbReference type="Pfam" id="PF04352">
    <property type="entry name" value="ProQ"/>
    <property type="match status" value="1"/>
</dbReference>
<dbReference type="Pfam" id="PF17516">
    <property type="entry name" value="ProQ_C"/>
    <property type="match status" value="1"/>
</dbReference>
<dbReference type="SMART" id="SM00945">
    <property type="entry name" value="ProQ"/>
    <property type="match status" value="1"/>
</dbReference>
<dbReference type="SUPFAM" id="SSF48657">
    <property type="entry name" value="FinO-like"/>
    <property type="match status" value="1"/>
</dbReference>
<comment type="function">
    <text evidence="1">RNA chaperone with significant RNA binding, RNA strand exchange and RNA duplexing activities. May regulate ProP activity through an RNA-based, post-transcriptional mechanism.</text>
</comment>
<comment type="subcellular location">
    <subcellularLocation>
        <location evidence="1">Cytoplasm</location>
    </subcellularLocation>
</comment>
<comment type="similarity">
    <text evidence="1">Belongs to the ProQ family.</text>
</comment>
<evidence type="ECO:0000255" key="1">
    <source>
        <dbReference type="HAMAP-Rule" id="MF_00749"/>
    </source>
</evidence>
<evidence type="ECO:0000256" key="2">
    <source>
        <dbReference type="SAM" id="MobiDB-lite"/>
    </source>
</evidence>
<keyword id="KW-0143">Chaperone</keyword>
<keyword id="KW-0963">Cytoplasm</keyword>
<keyword id="KW-0694">RNA-binding</keyword>
<name>PROQ_ECOBW</name>
<feature type="chain" id="PRO_1000212845" description="RNA chaperone ProQ">
    <location>
        <begin position="1"/>
        <end position="232"/>
    </location>
</feature>
<feature type="region of interest" description="Disordered" evidence="2">
    <location>
        <begin position="105"/>
        <end position="182"/>
    </location>
</feature>
<feature type="compositionally biased region" description="Basic and acidic residues" evidence="2">
    <location>
        <begin position="117"/>
        <end position="136"/>
    </location>
</feature>
<feature type="compositionally biased region" description="Basic residues" evidence="2">
    <location>
        <begin position="137"/>
        <end position="146"/>
    </location>
</feature>
<feature type="compositionally biased region" description="Basic and acidic residues" evidence="2">
    <location>
        <begin position="147"/>
        <end position="177"/>
    </location>
</feature>
<reference key="1">
    <citation type="journal article" date="2009" name="J. Bacteriol.">
        <title>Genomic sequencing reveals regulatory mutations and recombinational events in the widely used MC4100 lineage of Escherichia coli K-12.</title>
        <authorList>
            <person name="Ferenci T."/>
            <person name="Zhou Z."/>
            <person name="Betteridge T."/>
            <person name="Ren Y."/>
            <person name="Liu Y."/>
            <person name="Feng L."/>
            <person name="Reeves P.R."/>
            <person name="Wang L."/>
        </authorList>
    </citation>
    <scope>NUCLEOTIDE SEQUENCE [LARGE SCALE GENOMIC DNA]</scope>
    <source>
        <strain>K12 / MC4100 / BW2952</strain>
    </source>
</reference>
<accession>C4ZZI8</accession>
<organism>
    <name type="scientific">Escherichia coli (strain K12 / MC4100 / BW2952)</name>
    <dbReference type="NCBI Taxonomy" id="595496"/>
    <lineage>
        <taxon>Bacteria</taxon>
        <taxon>Pseudomonadati</taxon>
        <taxon>Pseudomonadota</taxon>
        <taxon>Gammaproteobacteria</taxon>
        <taxon>Enterobacterales</taxon>
        <taxon>Enterobacteriaceae</taxon>
        <taxon>Escherichia</taxon>
    </lineage>
</organism>
<gene>
    <name evidence="1" type="primary">proQ</name>
    <name type="ordered locus">BWG_1645</name>
</gene>
<sequence length="232" mass="25893">MENQPKLNSSKEVIAFLAERFPHCFSAEGEARPLKIGIFQDLVDRVAGEMNLSKTQLRSALRLYTSSWRYLYGVKPGATRVDLDGNPCGELDEQHVEHARKQLEEAKARVQAQRAEQQAKKREAAATAGEKEDAPRRERKPRPTTPRRKEGAERKPRAQKPVEKAPKTVKAPREEQHTPVSDISALTVGQALKVKAGQNAMDATVLEITKDGVRVQLNSGMSLIVRAEHLVF</sequence>